<keyword id="KW-0131">Cell cycle</keyword>
<keyword id="KW-0132">Cell division</keyword>
<keyword id="KW-1185">Reference proteome</keyword>
<keyword id="KW-0717">Septation</keyword>
<feature type="chain" id="PRO_1000062418" description="Putative septation protein SpoVG">
    <location>
        <begin position="1"/>
        <end position="101"/>
    </location>
</feature>
<gene>
    <name evidence="1" type="primary">spoVG</name>
    <name type="ordered locus">Adeh_0122</name>
</gene>
<organism>
    <name type="scientific">Anaeromyxobacter dehalogenans (strain 2CP-C)</name>
    <dbReference type="NCBI Taxonomy" id="290397"/>
    <lineage>
        <taxon>Bacteria</taxon>
        <taxon>Pseudomonadati</taxon>
        <taxon>Myxococcota</taxon>
        <taxon>Myxococcia</taxon>
        <taxon>Myxococcales</taxon>
        <taxon>Cystobacterineae</taxon>
        <taxon>Anaeromyxobacteraceae</taxon>
        <taxon>Anaeromyxobacter</taxon>
    </lineage>
</organism>
<dbReference type="EMBL" id="CP000251">
    <property type="protein sequence ID" value="ABC79899.1"/>
    <property type="molecule type" value="Genomic_DNA"/>
</dbReference>
<dbReference type="RefSeq" id="WP_011419182.1">
    <property type="nucleotide sequence ID" value="NC_007760.1"/>
</dbReference>
<dbReference type="SMR" id="Q2IM68"/>
<dbReference type="STRING" id="290397.Adeh_0122"/>
<dbReference type="KEGG" id="ade:Adeh_0122"/>
<dbReference type="eggNOG" id="COG2088">
    <property type="taxonomic scope" value="Bacteria"/>
</dbReference>
<dbReference type="HOGENOM" id="CLU_103669_2_1_7"/>
<dbReference type="OrthoDB" id="9796286at2"/>
<dbReference type="Proteomes" id="UP000001935">
    <property type="component" value="Chromosome"/>
</dbReference>
<dbReference type="GO" id="GO:0000917">
    <property type="term" value="P:division septum assembly"/>
    <property type="evidence" value="ECO:0007669"/>
    <property type="project" value="UniProtKB-KW"/>
</dbReference>
<dbReference type="GO" id="GO:0030435">
    <property type="term" value="P:sporulation resulting in formation of a cellular spore"/>
    <property type="evidence" value="ECO:0007669"/>
    <property type="project" value="InterPro"/>
</dbReference>
<dbReference type="Gene3D" id="3.30.1120.40">
    <property type="entry name" value="Stage V sporulation protein G"/>
    <property type="match status" value="1"/>
</dbReference>
<dbReference type="HAMAP" id="MF_00819">
    <property type="entry name" value="SpoVG"/>
    <property type="match status" value="1"/>
</dbReference>
<dbReference type="InterPro" id="IPR007170">
    <property type="entry name" value="SpoVG"/>
</dbReference>
<dbReference type="InterPro" id="IPR036751">
    <property type="entry name" value="SpoVG_sf"/>
</dbReference>
<dbReference type="NCBIfam" id="NF009749">
    <property type="entry name" value="PRK13259.1"/>
    <property type="match status" value="1"/>
</dbReference>
<dbReference type="PANTHER" id="PTHR38429">
    <property type="entry name" value="SEPTATION PROTEIN SPOVG-RELATED"/>
    <property type="match status" value="1"/>
</dbReference>
<dbReference type="PANTHER" id="PTHR38429:SF1">
    <property type="entry name" value="SEPTATION PROTEIN SPOVG-RELATED"/>
    <property type="match status" value="1"/>
</dbReference>
<dbReference type="Pfam" id="PF04026">
    <property type="entry name" value="SpoVG"/>
    <property type="match status" value="1"/>
</dbReference>
<dbReference type="SUPFAM" id="SSF160537">
    <property type="entry name" value="SpoVG-like"/>
    <property type="match status" value="1"/>
</dbReference>
<protein>
    <recommendedName>
        <fullName evidence="1">Putative septation protein SpoVG</fullName>
    </recommendedName>
</protein>
<name>SP5G_ANADE</name>
<proteinExistence type="inferred from homology"/>
<reference key="1">
    <citation type="submission" date="2006-01" db="EMBL/GenBank/DDBJ databases">
        <title>Complete sequence of Anaeromyxobacter dehalogenans 2CP-C.</title>
        <authorList>
            <person name="Copeland A."/>
            <person name="Lucas S."/>
            <person name="Lapidus A."/>
            <person name="Barry K."/>
            <person name="Detter J.C."/>
            <person name="Glavina T."/>
            <person name="Hammon N."/>
            <person name="Israni S."/>
            <person name="Pitluck S."/>
            <person name="Brettin T."/>
            <person name="Bruce D."/>
            <person name="Han C."/>
            <person name="Tapia R."/>
            <person name="Gilna P."/>
            <person name="Kiss H."/>
            <person name="Schmutz J."/>
            <person name="Larimer F."/>
            <person name="Land M."/>
            <person name="Kyrpides N."/>
            <person name="Anderson I."/>
            <person name="Sanford R.A."/>
            <person name="Ritalahti K.M."/>
            <person name="Thomas H.S."/>
            <person name="Kirby J.R."/>
            <person name="Zhulin I.B."/>
            <person name="Loeffler F.E."/>
            <person name="Richardson P."/>
        </authorList>
    </citation>
    <scope>NUCLEOTIDE SEQUENCE [LARGE SCALE GENOMIC DNA]</scope>
    <source>
        <strain>2CP-C</strain>
    </source>
</reference>
<accession>Q2IM68</accession>
<sequence>MEITEVRVFPVNEEKLKAYVTITLDHCFVIRDLKVIHGNTGLFIAMPAKRRKDGTFKDIAHPLNSDTREKMERTILAEYDRELKKGAAAPARATGTDPHED</sequence>
<comment type="function">
    <text evidence="1">Could be involved in septation.</text>
</comment>
<comment type="similarity">
    <text evidence="1">Belongs to the SpoVG family.</text>
</comment>
<evidence type="ECO:0000255" key="1">
    <source>
        <dbReference type="HAMAP-Rule" id="MF_00819"/>
    </source>
</evidence>